<organism>
    <name type="scientific">Mus musculus</name>
    <name type="common">Mouse</name>
    <dbReference type="NCBI Taxonomy" id="10090"/>
    <lineage>
        <taxon>Eukaryota</taxon>
        <taxon>Metazoa</taxon>
        <taxon>Chordata</taxon>
        <taxon>Craniata</taxon>
        <taxon>Vertebrata</taxon>
        <taxon>Euteleostomi</taxon>
        <taxon>Mammalia</taxon>
        <taxon>Eutheria</taxon>
        <taxon>Euarchontoglires</taxon>
        <taxon>Glires</taxon>
        <taxon>Rodentia</taxon>
        <taxon>Myomorpha</taxon>
        <taxon>Muroidea</taxon>
        <taxon>Muridae</taxon>
        <taxon>Murinae</taxon>
        <taxon>Mus</taxon>
        <taxon>Mus</taxon>
    </lineage>
</organism>
<reference key="1">
    <citation type="journal article" date="2005" name="Science">
        <title>The transcriptional landscape of the mammalian genome.</title>
        <authorList>
            <person name="Carninci P."/>
            <person name="Kasukawa T."/>
            <person name="Katayama S."/>
            <person name="Gough J."/>
            <person name="Frith M.C."/>
            <person name="Maeda N."/>
            <person name="Oyama R."/>
            <person name="Ravasi T."/>
            <person name="Lenhard B."/>
            <person name="Wells C."/>
            <person name="Kodzius R."/>
            <person name="Shimokawa K."/>
            <person name="Bajic V.B."/>
            <person name="Brenner S.E."/>
            <person name="Batalov S."/>
            <person name="Forrest A.R."/>
            <person name="Zavolan M."/>
            <person name="Davis M.J."/>
            <person name="Wilming L.G."/>
            <person name="Aidinis V."/>
            <person name="Allen J.E."/>
            <person name="Ambesi-Impiombato A."/>
            <person name="Apweiler R."/>
            <person name="Aturaliya R.N."/>
            <person name="Bailey T.L."/>
            <person name="Bansal M."/>
            <person name="Baxter L."/>
            <person name="Beisel K.W."/>
            <person name="Bersano T."/>
            <person name="Bono H."/>
            <person name="Chalk A.M."/>
            <person name="Chiu K.P."/>
            <person name="Choudhary V."/>
            <person name="Christoffels A."/>
            <person name="Clutterbuck D.R."/>
            <person name="Crowe M.L."/>
            <person name="Dalla E."/>
            <person name="Dalrymple B.P."/>
            <person name="de Bono B."/>
            <person name="Della Gatta G."/>
            <person name="di Bernardo D."/>
            <person name="Down T."/>
            <person name="Engstrom P."/>
            <person name="Fagiolini M."/>
            <person name="Faulkner G."/>
            <person name="Fletcher C.F."/>
            <person name="Fukushima T."/>
            <person name="Furuno M."/>
            <person name="Futaki S."/>
            <person name="Gariboldi M."/>
            <person name="Georgii-Hemming P."/>
            <person name="Gingeras T.R."/>
            <person name="Gojobori T."/>
            <person name="Green R.E."/>
            <person name="Gustincich S."/>
            <person name="Harbers M."/>
            <person name="Hayashi Y."/>
            <person name="Hensch T.K."/>
            <person name="Hirokawa N."/>
            <person name="Hill D."/>
            <person name="Huminiecki L."/>
            <person name="Iacono M."/>
            <person name="Ikeo K."/>
            <person name="Iwama A."/>
            <person name="Ishikawa T."/>
            <person name="Jakt M."/>
            <person name="Kanapin A."/>
            <person name="Katoh M."/>
            <person name="Kawasawa Y."/>
            <person name="Kelso J."/>
            <person name="Kitamura H."/>
            <person name="Kitano H."/>
            <person name="Kollias G."/>
            <person name="Krishnan S.P."/>
            <person name="Kruger A."/>
            <person name="Kummerfeld S.K."/>
            <person name="Kurochkin I.V."/>
            <person name="Lareau L.F."/>
            <person name="Lazarevic D."/>
            <person name="Lipovich L."/>
            <person name="Liu J."/>
            <person name="Liuni S."/>
            <person name="McWilliam S."/>
            <person name="Madan Babu M."/>
            <person name="Madera M."/>
            <person name="Marchionni L."/>
            <person name="Matsuda H."/>
            <person name="Matsuzawa S."/>
            <person name="Miki H."/>
            <person name="Mignone F."/>
            <person name="Miyake S."/>
            <person name="Morris K."/>
            <person name="Mottagui-Tabar S."/>
            <person name="Mulder N."/>
            <person name="Nakano N."/>
            <person name="Nakauchi H."/>
            <person name="Ng P."/>
            <person name="Nilsson R."/>
            <person name="Nishiguchi S."/>
            <person name="Nishikawa S."/>
            <person name="Nori F."/>
            <person name="Ohara O."/>
            <person name="Okazaki Y."/>
            <person name="Orlando V."/>
            <person name="Pang K.C."/>
            <person name="Pavan W.J."/>
            <person name="Pavesi G."/>
            <person name="Pesole G."/>
            <person name="Petrovsky N."/>
            <person name="Piazza S."/>
            <person name="Reed J."/>
            <person name="Reid J.F."/>
            <person name="Ring B.Z."/>
            <person name="Ringwald M."/>
            <person name="Rost B."/>
            <person name="Ruan Y."/>
            <person name="Salzberg S.L."/>
            <person name="Sandelin A."/>
            <person name="Schneider C."/>
            <person name="Schoenbach C."/>
            <person name="Sekiguchi K."/>
            <person name="Semple C.A."/>
            <person name="Seno S."/>
            <person name="Sessa L."/>
            <person name="Sheng Y."/>
            <person name="Shibata Y."/>
            <person name="Shimada H."/>
            <person name="Shimada K."/>
            <person name="Silva D."/>
            <person name="Sinclair B."/>
            <person name="Sperling S."/>
            <person name="Stupka E."/>
            <person name="Sugiura K."/>
            <person name="Sultana R."/>
            <person name="Takenaka Y."/>
            <person name="Taki K."/>
            <person name="Tammoja K."/>
            <person name="Tan S.L."/>
            <person name="Tang S."/>
            <person name="Taylor M.S."/>
            <person name="Tegner J."/>
            <person name="Teichmann S.A."/>
            <person name="Ueda H.R."/>
            <person name="van Nimwegen E."/>
            <person name="Verardo R."/>
            <person name="Wei C.L."/>
            <person name="Yagi K."/>
            <person name="Yamanishi H."/>
            <person name="Zabarovsky E."/>
            <person name="Zhu S."/>
            <person name="Zimmer A."/>
            <person name="Hide W."/>
            <person name="Bult C."/>
            <person name="Grimmond S.M."/>
            <person name="Teasdale R.D."/>
            <person name="Liu E.T."/>
            <person name="Brusic V."/>
            <person name="Quackenbush J."/>
            <person name="Wahlestedt C."/>
            <person name="Mattick J.S."/>
            <person name="Hume D.A."/>
            <person name="Kai C."/>
            <person name="Sasaki D."/>
            <person name="Tomaru Y."/>
            <person name="Fukuda S."/>
            <person name="Kanamori-Katayama M."/>
            <person name="Suzuki M."/>
            <person name="Aoki J."/>
            <person name="Arakawa T."/>
            <person name="Iida J."/>
            <person name="Imamura K."/>
            <person name="Itoh M."/>
            <person name="Kato T."/>
            <person name="Kawaji H."/>
            <person name="Kawagashira N."/>
            <person name="Kawashima T."/>
            <person name="Kojima M."/>
            <person name="Kondo S."/>
            <person name="Konno H."/>
            <person name="Nakano K."/>
            <person name="Ninomiya N."/>
            <person name="Nishio T."/>
            <person name="Okada M."/>
            <person name="Plessy C."/>
            <person name="Shibata K."/>
            <person name="Shiraki T."/>
            <person name="Suzuki S."/>
            <person name="Tagami M."/>
            <person name="Waki K."/>
            <person name="Watahiki A."/>
            <person name="Okamura-Oho Y."/>
            <person name="Suzuki H."/>
            <person name="Kawai J."/>
            <person name="Hayashizaki Y."/>
        </authorList>
    </citation>
    <scope>NUCLEOTIDE SEQUENCE [LARGE SCALE MRNA]</scope>
    <source>
        <strain>C57BL/6J</strain>
        <tissue>Testis</tissue>
    </source>
</reference>
<reference key="2">
    <citation type="journal article" date="2004" name="Genome Res.">
        <title>The status, quality, and expansion of the NIH full-length cDNA project: the Mammalian Gene Collection (MGC).</title>
        <authorList>
            <consortium name="The MGC Project Team"/>
        </authorList>
    </citation>
    <scope>NUCLEOTIDE SEQUENCE [LARGE SCALE MRNA]</scope>
    <source>
        <tissue>Testis</tissue>
    </source>
</reference>
<reference key="3">
    <citation type="journal article" date="2007" name="Arch. Biochem. Biophys.">
        <title>RNF151, a testis-specific RING finger protein, interacts with dysbindin.</title>
        <authorList>
            <person name="Nian H."/>
            <person name="Fan C."/>
            <person name="Liao S."/>
            <person name="Shi Y."/>
            <person name="Zhang K."/>
            <person name="Liu Y."/>
            <person name="Han C."/>
        </authorList>
    </citation>
    <scope>FUNCTION</scope>
    <scope>TISSUE SPECIFICITY</scope>
    <scope>SUBCELLULAR LOCATION</scope>
    <scope>INTERACTION WITH DTNBP1</scope>
</reference>
<reference key="4">
    <citation type="journal article" date="2022" name="BMC Biol.">
        <title>The testis-specific E3 ubiquitin ligase RNF133 is required for fecundity in mice.</title>
        <authorList>
            <person name="Nozawa K."/>
            <person name="Fujihara Y."/>
            <person name="Devlin D.J."/>
            <person name="Deras R.E."/>
            <person name="Kent K."/>
            <person name="Larina I.V."/>
            <person name="Umezu K."/>
            <person name="Yu Z."/>
            <person name="Sutton C.M."/>
            <person name="Ye Q."/>
            <person name="Dean L.K."/>
            <person name="Emori C."/>
            <person name="Ikawa M."/>
            <person name="Garcia T.X."/>
            <person name="Matzuk M.M."/>
        </authorList>
    </citation>
    <scope>DISRUPTION PHENOTYPE</scope>
    <scope>TISSUE SPECIFICITY</scope>
    <scope>DEVELOPMENTAL STAGE</scope>
</reference>
<gene>
    <name type="primary">Rnf151</name>
</gene>
<feature type="chain" id="PRO_0000255255" description="RING finger protein 151">
    <location>
        <begin position="1"/>
        <end position="239"/>
    </location>
</feature>
<feature type="zinc finger region" description="RING-type" evidence="1">
    <location>
        <begin position="20"/>
        <end position="58"/>
    </location>
</feature>
<feature type="zinc finger region" description="TRAF-type" evidence="2">
    <location>
        <begin position="101"/>
        <end position="156"/>
    </location>
</feature>
<comment type="function">
    <text evidence="3">May be involved in acrosome formation of spermatids.</text>
</comment>
<comment type="subunit">
    <text evidence="3">Interacts with DTNBP1.</text>
</comment>
<comment type="subcellular location">
    <subcellularLocation>
        <location evidence="3">Cytoplasm</location>
    </subcellularLocation>
    <subcellularLocation>
        <location evidence="3">Nucleus</location>
    </subcellularLocation>
</comment>
<comment type="tissue specificity">
    <text evidence="3 4">Expressed in testis (PubMed:17577571, PubMed:35831855). Expressed in round spermatids of the stages VII-VIII semniniferous tubules. Expressed in elongating spermatids of stages VIII-IX seminiferous tubules (at protein level) (PubMed:17577571).</text>
</comment>
<comment type="developmental stage">
    <text evidence="4">Expression begins in the testis at day 15 and increases dramatically from day 21 and thereafter.</text>
</comment>
<comment type="disruption phenotype">
    <text evidence="4">Male mutants fecundity is normal.</text>
</comment>
<dbReference type="EMBL" id="AK005854">
    <property type="protein sequence ID" value="BAB24277.1"/>
    <property type="molecule type" value="mRNA"/>
</dbReference>
<dbReference type="EMBL" id="BC049562">
    <property type="protein sequence ID" value="AAH49562.1"/>
    <property type="molecule type" value="mRNA"/>
</dbReference>
<dbReference type="CCDS" id="CCDS37492.1"/>
<dbReference type="RefSeq" id="NP_080481.1">
    <property type="nucleotide sequence ID" value="NM_026205.3"/>
</dbReference>
<dbReference type="SMR" id="Q9CQ29"/>
<dbReference type="FunCoup" id="Q9CQ29">
    <property type="interactions" value="754"/>
</dbReference>
<dbReference type="STRING" id="10090.ENSMUSP00000008626"/>
<dbReference type="PhosphoSitePlus" id="Q9CQ29"/>
<dbReference type="SwissPalm" id="Q9CQ29"/>
<dbReference type="PaxDb" id="10090-ENSMUSP00000008626"/>
<dbReference type="Antibodypedia" id="23363">
    <property type="antibodies" value="27 antibodies from 13 providers"/>
</dbReference>
<dbReference type="Ensembl" id="ENSMUST00000008626.10">
    <property type="protein sequence ID" value="ENSMUSP00000008626.9"/>
    <property type="gene ID" value="ENSMUSG00000008482.10"/>
</dbReference>
<dbReference type="GeneID" id="67504"/>
<dbReference type="KEGG" id="mmu:67504"/>
<dbReference type="UCSC" id="uc008axw.1">
    <property type="organism name" value="mouse"/>
</dbReference>
<dbReference type="AGR" id="MGI:1914754"/>
<dbReference type="CTD" id="146310"/>
<dbReference type="MGI" id="MGI:1914754">
    <property type="gene designation" value="Rnf151"/>
</dbReference>
<dbReference type="VEuPathDB" id="HostDB:ENSMUSG00000008482"/>
<dbReference type="eggNOG" id="KOG0297">
    <property type="taxonomic scope" value="Eukaryota"/>
</dbReference>
<dbReference type="GeneTree" id="ENSGT00530000063647"/>
<dbReference type="HOGENOM" id="CLU_076732_3_0_1"/>
<dbReference type="InParanoid" id="Q9CQ29"/>
<dbReference type="OMA" id="RSACHHI"/>
<dbReference type="OrthoDB" id="9049620at2759"/>
<dbReference type="PhylomeDB" id="Q9CQ29"/>
<dbReference type="TreeFam" id="TF351947"/>
<dbReference type="BioGRID-ORCS" id="67504">
    <property type="hits" value="3 hits in 77 CRISPR screens"/>
</dbReference>
<dbReference type="PRO" id="PR:Q9CQ29"/>
<dbReference type="Proteomes" id="UP000000589">
    <property type="component" value="Chromosome 17"/>
</dbReference>
<dbReference type="RNAct" id="Q9CQ29">
    <property type="molecule type" value="protein"/>
</dbReference>
<dbReference type="Bgee" id="ENSMUSG00000008482">
    <property type="expression patterns" value="Expressed in seminiferous tubule of testis and 21 other cell types or tissues"/>
</dbReference>
<dbReference type="ExpressionAtlas" id="Q9CQ29">
    <property type="expression patterns" value="baseline and differential"/>
</dbReference>
<dbReference type="GO" id="GO:0005737">
    <property type="term" value="C:cytoplasm"/>
    <property type="evidence" value="ECO:0007669"/>
    <property type="project" value="UniProtKB-SubCell"/>
</dbReference>
<dbReference type="GO" id="GO:0005634">
    <property type="term" value="C:nucleus"/>
    <property type="evidence" value="ECO:0000314"/>
    <property type="project" value="MGI"/>
</dbReference>
<dbReference type="GO" id="GO:0008270">
    <property type="term" value="F:zinc ion binding"/>
    <property type="evidence" value="ECO:0007669"/>
    <property type="project" value="UniProtKB-KW"/>
</dbReference>
<dbReference type="GO" id="GO:0030154">
    <property type="term" value="P:cell differentiation"/>
    <property type="evidence" value="ECO:0007669"/>
    <property type="project" value="UniProtKB-KW"/>
</dbReference>
<dbReference type="GO" id="GO:0007283">
    <property type="term" value="P:spermatogenesis"/>
    <property type="evidence" value="ECO:0007669"/>
    <property type="project" value="UniProtKB-KW"/>
</dbReference>
<dbReference type="Gene3D" id="3.30.40.10">
    <property type="entry name" value="Zinc/RING finger domain, C3HC4 (zinc finger)"/>
    <property type="match status" value="2"/>
</dbReference>
<dbReference type="InterPro" id="IPR001841">
    <property type="entry name" value="Znf_RING"/>
</dbReference>
<dbReference type="InterPro" id="IPR013083">
    <property type="entry name" value="Znf_RING/FYVE/PHD"/>
</dbReference>
<dbReference type="InterPro" id="IPR017907">
    <property type="entry name" value="Znf_RING_CS"/>
</dbReference>
<dbReference type="InterPro" id="IPR013010">
    <property type="entry name" value="Znf_SIAH"/>
</dbReference>
<dbReference type="InterPro" id="IPR001293">
    <property type="entry name" value="Znf_TRAF"/>
</dbReference>
<dbReference type="PANTHER" id="PTHR10131:SF157">
    <property type="entry name" value="RECEPTOR-ASSOCIATED FACTOR, PUTATIVE-RELATED"/>
    <property type="match status" value="1"/>
</dbReference>
<dbReference type="PANTHER" id="PTHR10131">
    <property type="entry name" value="TNF RECEPTOR ASSOCIATED FACTOR"/>
    <property type="match status" value="1"/>
</dbReference>
<dbReference type="Pfam" id="PF13923">
    <property type="entry name" value="zf-C3HC4_2"/>
    <property type="match status" value="1"/>
</dbReference>
<dbReference type="SMART" id="SM00184">
    <property type="entry name" value="RING"/>
    <property type="match status" value="1"/>
</dbReference>
<dbReference type="SUPFAM" id="SSF57850">
    <property type="entry name" value="RING/U-box"/>
    <property type="match status" value="1"/>
</dbReference>
<dbReference type="SUPFAM" id="SSF49599">
    <property type="entry name" value="TRAF domain-like"/>
    <property type="match status" value="1"/>
</dbReference>
<dbReference type="PROSITE" id="PS00518">
    <property type="entry name" value="ZF_RING_1"/>
    <property type="match status" value="1"/>
</dbReference>
<dbReference type="PROSITE" id="PS50089">
    <property type="entry name" value="ZF_RING_2"/>
    <property type="match status" value="1"/>
</dbReference>
<dbReference type="PROSITE" id="PS51081">
    <property type="entry name" value="ZF_SIAH"/>
    <property type="match status" value="1"/>
</dbReference>
<dbReference type="PROSITE" id="PS50145">
    <property type="entry name" value="ZF_TRAF"/>
    <property type="match status" value="1"/>
</dbReference>
<accession>Q9CQ29</accession>
<proteinExistence type="evidence at protein level"/>
<sequence length="239" mass="27175">MSGGYDLNLFASPPDCKFLCSVCHGVLKRPTRLPCSHIFCKKCIFRWLARQNTCPCCRKEVTRRKMVEVNKLRKTIGRLQVKCKNAAAGCLDTHPLAHRKEHQDSCPFELMACPNEGCTVQVLRGVLDEHRQHCQQNGQQRCPLGCGSTLAALEGEHHNCYRELRDAWVQRHERNRTLLLGLLGRVRRVHLTTSIIHQQLAQLSNFLEDDDNLLLNAQVQETEVTPEAEMRGTQGQSVL</sequence>
<name>RN151_MOUSE</name>
<evidence type="ECO:0000255" key="1">
    <source>
        <dbReference type="PROSITE-ProRule" id="PRU00175"/>
    </source>
</evidence>
<evidence type="ECO:0000255" key="2">
    <source>
        <dbReference type="PROSITE-ProRule" id="PRU00207"/>
    </source>
</evidence>
<evidence type="ECO:0000269" key="3">
    <source>
    </source>
</evidence>
<evidence type="ECO:0000269" key="4">
    <source>
    </source>
</evidence>
<protein>
    <recommendedName>
        <fullName>RING finger protein 151</fullName>
    </recommendedName>
</protein>
<keyword id="KW-0963">Cytoplasm</keyword>
<keyword id="KW-0221">Differentiation</keyword>
<keyword id="KW-0479">Metal-binding</keyword>
<keyword id="KW-0539">Nucleus</keyword>
<keyword id="KW-1185">Reference proteome</keyword>
<keyword id="KW-0744">Spermatogenesis</keyword>
<keyword id="KW-0862">Zinc</keyword>
<keyword id="KW-0863">Zinc-finger</keyword>